<gene>
    <name evidence="1" type="primary">rpsC</name>
    <name type="ordered locus">FN1639</name>
</gene>
<organism>
    <name type="scientific">Fusobacterium nucleatum subsp. nucleatum (strain ATCC 25586 / DSM 15643 / BCRC 10681 / CIP 101130 / JCM 8532 / KCTC 2640 / LMG 13131 / VPI 4355)</name>
    <dbReference type="NCBI Taxonomy" id="190304"/>
    <lineage>
        <taxon>Bacteria</taxon>
        <taxon>Fusobacteriati</taxon>
        <taxon>Fusobacteriota</taxon>
        <taxon>Fusobacteriia</taxon>
        <taxon>Fusobacteriales</taxon>
        <taxon>Fusobacteriaceae</taxon>
        <taxon>Fusobacterium</taxon>
    </lineage>
</organism>
<dbReference type="EMBL" id="AE009951">
    <property type="protein sequence ID" value="AAL93754.1"/>
    <property type="molecule type" value="Genomic_DNA"/>
</dbReference>
<dbReference type="RefSeq" id="NP_602455.1">
    <property type="nucleotide sequence ID" value="NC_003454.1"/>
</dbReference>
<dbReference type="RefSeq" id="WP_005892367.1">
    <property type="nucleotide sequence ID" value="NZ_CP084110.1"/>
</dbReference>
<dbReference type="SMR" id="Q8RIG1"/>
<dbReference type="FunCoup" id="Q8RIG1">
    <property type="interactions" value="412"/>
</dbReference>
<dbReference type="STRING" id="190304.FN1639"/>
<dbReference type="PaxDb" id="190304-FN1639"/>
<dbReference type="EnsemblBacteria" id="AAL93754">
    <property type="protein sequence ID" value="AAL93754"/>
    <property type="gene ID" value="FN1639"/>
</dbReference>
<dbReference type="GeneID" id="93327354"/>
<dbReference type="KEGG" id="fnu:FN1639"/>
<dbReference type="PATRIC" id="fig|190304.8.peg.132"/>
<dbReference type="eggNOG" id="COG0092">
    <property type="taxonomic scope" value="Bacteria"/>
</dbReference>
<dbReference type="HOGENOM" id="CLU_058591_0_2_0"/>
<dbReference type="InParanoid" id="Q8RIG1"/>
<dbReference type="BioCyc" id="FNUC190304:G1FZS-142-MONOMER"/>
<dbReference type="PRO" id="PR:Q8RIG1"/>
<dbReference type="Proteomes" id="UP000002521">
    <property type="component" value="Chromosome"/>
</dbReference>
<dbReference type="GO" id="GO:0022627">
    <property type="term" value="C:cytosolic small ribosomal subunit"/>
    <property type="evidence" value="ECO:0000318"/>
    <property type="project" value="GO_Central"/>
</dbReference>
<dbReference type="GO" id="GO:0003729">
    <property type="term" value="F:mRNA binding"/>
    <property type="evidence" value="ECO:0007669"/>
    <property type="project" value="UniProtKB-UniRule"/>
</dbReference>
<dbReference type="GO" id="GO:0019843">
    <property type="term" value="F:rRNA binding"/>
    <property type="evidence" value="ECO:0007669"/>
    <property type="project" value="UniProtKB-UniRule"/>
</dbReference>
<dbReference type="GO" id="GO:0003735">
    <property type="term" value="F:structural constituent of ribosome"/>
    <property type="evidence" value="ECO:0000318"/>
    <property type="project" value="GO_Central"/>
</dbReference>
<dbReference type="GO" id="GO:0006412">
    <property type="term" value="P:translation"/>
    <property type="evidence" value="ECO:0007669"/>
    <property type="project" value="UniProtKB-UniRule"/>
</dbReference>
<dbReference type="CDD" id="cd02412">
    <property type="entry name" value="KH-II_30S_S3"/>
    <property type="match status" value="1"/>
</dbReference>
<dbReference type="FunFam" id="3.30.1140.32:FF:000002">
    <property type="entry name" value="30S ribosomal protein S3"/>
    <property type="match status" value="1"/>
</dbReference>
<dbReference type="FunFam" id="3.30.300.20:FF:000001">
    <property type="entry name" value="30S ribosomal protein S3"/>
    <property type="match status" value="1"/>
</dbReference>
<dbReference type="Gene3D" id="3.30.300.20">
    <property type="match status" value="1"/>
</dbReference>
<dbReference type="Gene3D" id="3.30.1140.32">
    <property type="entry name" value="Ribosomal protein S3, C-terminal domain"/>
    <property type="match status" value="1"/>
</dbReference>
<dbReference type="HAMAP" id="MF_01309_B">
    <property type="entry name" value="Ribosomal_uS3_B"/>
    <property type="match status" value="1"/>
</dbReference>
<dbReference type="InterPro" id="IPR004087">
    <property type="entry name" value="KH_dom"/>
</dbReference>
<dbReference type="InterPro" id="IPR015946">
    <property type="entry name" value="KH_dom-like_a/b"/>
</dbReference>
<dbReference type="InterPro" id="IPR004044">
    <property type="entry name" value="KH_dom_type_2"/>
</dbReference>
<dbReference type="InterPro" id="IPR009019">
    <property type="entry name" value="KH_sf_prok-type"/>
</dbReference>
<dbReference type="InterPro" id="IPR036419">
    <property type="entry name" value="Ribosomal_S3_C_sf"/>
</dbReference>
<dbReference type="InterPro" id="IPR005704">
    <property type="entry name" value="Ribosomal_uS3_bac-typ"/>
</dbReference>
<dbReference type="InterPro" id="IPR001351">
    <property type="entry name" value="Ribosomal_uS3_C"/>
</dbReference>
<dbReference type="InterPro" id="IPR018280">
    <property type="entry name" value="Ribosomal_uS3_CS"/>
</dbReference>
<dbReference type="NCBIfam" id="TIGR01009">
    <property type="entry name" value="rpsC_bact"/>
    <property type="match status" value="1"/>
</dbReference>
<dbReference type="PANTHER" id="PTHR11760">
    <property type="entry name" value="30S/40S RIBOSOMAL PROTEIN S3"/>
    <property type="match status" value="1"/>
</dbReference>
<dbReference type="PANTHER" id="PTHR11760:SF19">
    <property type="entry name" value="SMALL RIBOSOMAL SUBUNIT PROTEIN US3C"/>
    <property type="match status" value="1"/>
</dbReference>
<dbReference type="Pfam" id="PF07650">
    <property type="entry name" value="KH_2"/>
    <property type="match status" value="1"/>
</dbReference>
<dbReference type="Pfam" id="PF00189">
    <property type="entry name" value="Ribosomal_S3_C"/>
    <property type="match status" value="1"/>
</dbReference>
<dbReference type="SMART" id="SM00322">
    <property type="entry name" value="KH"/>
    <property type="match status" value="1"/>
</dbReference>
<dbReference type="SUPFAM" id="SSF54814">
    <property type="entry name" value="Prokaryotic type KH domain (KH-domain type II)"/>
    <property type="match status" value="1"/>
</dbReference>
<dbReference type="SUPFAM" id="SSF54821">
    <property type="entry name" value="Ribosomal protein S3 C-terminal domain"/>
    <property type="match status" value="1"/>
</dbReference>
<dbReference type="PROSITE" id="PS50823">
    <property type="entry name" value="KH_TYPE_2"/>
    <property type="match status" value="1"/>
</dbReference>
<dbReference type="PROSITE" id="PS00548">
    <property type="entry name" value="RIBOSOMAL_S3"/>
    <property type="match status" value="1"/>
</dbReference>
<reference key="1">
    <citation type="journal article" date="2002" name="J. Bacteriol.">
        <title>Genome sequence and analysis of the oral bacterium Fusobacterium nucleatum strain ATCC 25586.</title>
        <authorList>
            <person name="Kapatral V."/>
            <person name="Anderson I."/>
            <person name="Ivanova N."/>
            <person name="Reznik G."/>
            <person name="Los T."/>
            <person name="Lykidis A."/>
            <person name="Bhattacharyya A."/>
            <person name="Bartman A."/>
            <person name="Gardner W."/>
            <person name="Grechkin G."/>
            <person name="Zhu L."/>
            <person name="Vasieva O."/>
            <person name="Chu L."/>
            <person name="Kogan Y."/>
            <person name="Chaga O."/>
            <person name="Goltsman E."/>
            <person name="Bernal A."/>
            <person name="Larsen N."/>
            <person name="D'Souza M."/>
            <person name="Walunas T."/>
            <person name="Pusch G."/>
            <person name="Haselkorn R."/>
            <person name="Fonstein M."/>
            <person name="Kyrpides N.C."/>
            <person name="Overbeek R."/>
        </authorList>
    </citation>
    <scope>NUCLEOTIDE SEQUENCE [LARGE SCALE GENOMIC DNA]</scope>
    <source>
        <strain>ATCC 25586 / DSM 15643 / BCRC 10681 / CIP 101130 / JCM 8532 / KCTC 2640 / LMG 13131 / VPI 4355</strain>
    </source>
</reference>
<comment type="function">
    <text evidence="1">Binds the lower part of the 30S subunit head. Binds mRNA in the 70S ribosome, positioning it for translation.</text>
</comment>
<comment type="subunit">
    <text evidence="1">Part of the 30S ribosomal subunit. Forms a tight complex with proteins S10 and S14.</text>
</comment>
<comment type="similarity">
    <text evidence="1">Belongs to the universal ribosomal protein uS3 family.</text>
</comment>
<proteinExistence type="inferred from homology"/>
<keyword id="KW-1185">Reference proteome</keyword>
<keyword id="KW-0687">Ribonucleoprotein</keyword>
<keyword id="KW-0689">Ribosomal protein</keyword>
<keyword id="KW-0694">RNA-binding</keyword>
<keyword id="KW-0699">rRNA-binding</keyword>
<accession>Q8RIG1</accession>
<evidence type="ECO:0000255" key="1">
    <source>
        <dbReference type="HAMAP-Rule" id="MF_01309"/>
    </source>
</evidence>
<evidence type="ECO:0000305" key="2"/>
<name>RS3_FUSNN</name>
<protein>
    <recommendedName>
        <fullName evidence="1">Small ribosomal subunit protein uS3</fullName>
    </recommendedName>
    <alternativeName>
        <fullName evidence="2">30S ribosomal protein S3</fullName>
    </alternativeName>
</protein>
<feature type="chain" id="PRO_0000130122" description="Small ribosomal subunit protein uS3">
    <location>
        <begin position="1"/>
        <end position="219"/>
    </location>
</feature>
<feature type="domain" description="KH type-2" evidence="1">
    <location>
        <begin position="39"/>
        <end position="108"/>
    </location>
</feature>
<sequence>MGQKVDPRGLRLGITRAWDSNWYADKKEYVKYFHEDVQIKEFIKKNYFHTGISKVRIERTSPSQVVVHIHTGKAGLIIGRKGAEIDALRAKLEKLTGKKVTVKVQEIKDLNGDAVLVAESIAAQIEKRIAYKKAMTQAISRSMKSPEVKGIKVMISGRLNGAEIARSEWAVEGKVPLHTLRADIDYAVATAHTTYGALGIKVWIFHGEVLPSKKEGGEA</sequence>